<comment type="function">
    <text evidence="1">Involved in peptide bond synthesis. Stimulates efficient translation and peptide-bond synthesis on native or reconstituted 70S ribosomes in vitro. Probably functions indirectly by altering the affinity of the ribosome for aminoacyl-tRNA, thus increasing their reactivity as acceptors for peptidyl transferase.</text>
</comment>
<comment type="pathway">
    <text evidence="1">Protein biosynthesis; polypeptide chain elongation.</text>
</comment>
<comment type="subcellular location">
    <subcellularLocation>
        <location evidence="1">Cytoplasm</location>
    </subcellularLocation>
</comment>
<comment type="similarity">
    <text evidence="1">Belongs to the elongation factor P family.</text>
</comment>
<organism>
    <name type="scientific">Rickettsia rickettsii (strain Sheila Smith)</name>
    <dbReference type="NCBI Taxonomy" id="392021"/>
    <lineage>
        <taxon>Bacteria</taxon>
        <taxon>Pseudomonadati</taxon>
        <taxon>Pseudomonadota</taxon>
        <taxon>Alphaproteobacteria</taxon>
        <taxon>Rickettsiales</taxon>
        <taxon>Rickettsiaceae</taxon>
        <taxon>Rickettsieae</taxon>
        <taxon>Rickettsia</taxon>
        <taxon>spotted fever group</taxon>
    </lineage>
</organism>
<keyword id="KW-0963">Cytoplasm</keyword>
<keyword id="KW-0251">Elongation factor</keyword>
<keyword id="KW-0648">Protein biosynthesis</keyword>
<gene>
    <name evidence="1" type="primary">efp</name>
    <name type="ordered locus">A1G_01845</name>
</gene>
<evidence type="ECO:0000255" key="1">
    <source>
        <dbReference type="HAMAP-Rule" id="MF_00141"/>
    </source>
</evidence>
<protein>
    <recommendedName>
        <fullName evidence="1">Elongation factor P</fullName>
        <shortName evidence="1">EF-P</shortName>
    </recommendedName>
</protein>
<feature type="chain" id="PRO_1000010837" description="Elongation factor P">
    <location>
        <begin position="1"/>
        <end position="188"/>
    </location>
</feature>
<name>EFP_RICRS</name>
<dbReference type="EMBL" id="CP000848">
    <property type="protein sequence ID" value="ABV75933.1"/>
    <property type="molecule type" value="Genomic_DNA"/>
</dbReference>
<dbReference type="RefSeq" id="WP_012150536.1">
    <property type="nucleotide sequence ID" value="NZ_CP121767.1"/>
</dbReference>
<dbReference type="SMR" id="A8GRA8"/>
<dbReference type="GeneID" id="79937099"/>
<dbReference type="KEGG" id="rri:A1G_01845"/>
<dbReference type="HOGENOM" id="CLU_074944_1_1_5"/>
<dbReference type="UniPathway" id="UPA00345"/>
<dbReference type="Proteomes" id="UP000006832">
    <property type="component" value="Chromosome"/>
</dbReference>
<dbReference type="GO" id="GO:0005737">
    <property type="term" value="C:cytoplasm"/>
    <property type="evidence" value="ECO:0007669"/>
    <property type="project" value="UniProtKB-SubCell"/>
</dbReference>
<dbReference type="GO" id="GO:0003746">
    <property type="term" value="F:translation elongation factor activity"/>
    <property type="evidence" value="ECO:0007669"/>
    <property type="project" value="UniProtKB-UniRule"/>
</dbReference>
<dbReference type="GO" id="GO:0043043">
    <property type="term" value="P:peptide biosynthetic process"/>
    <property type="evidence" value="ECO:0007669"/>
    <property type="project" value="InterPro"/>
</dbReference>
<dbReference type="CDD" id="cd04470">
    <property type="entry name" value="S1_EF-P_repeat_1"/>
    <property type="match status" value="1"/>
</dbReference>
<dbReference type="FunFam" id="2.30.30.30:FF:000003">
    <property type="entry name" value="Elongation factor P"/>
    <property type="match status" value="1"/>
</dbReference>
<dbReference type="FunFam" id="2.40.50.140:FF:000004">
    <property type="entry name" value="Elongation factor P"/>
    <property type="match status" value="1"/>
</dbReference>
<dbReference type="FunFam" id="2.40.50.140:FF:000009">
    <property type="entry name" value="Elongation factor P"/>
    <property type="match status" value="1"/>
</dbReference>
<dbReference type="Gene3D" id="2.30.30.30">
    <property type="match status" value="1"/>
</dbReference>
<dbReference type="Gene3D" id="2.40.50.140">
    <property type="entry name" value="Nucleic acid-binding proteins"/>
    <property type="match status" value="2"/>
</dbReference>
<dbReference type="HAMAP" id="MF_00141">
    <property type="entry name" value="EF_P"/>
    <property type="match status" value="1"/>
</dbReference>
<dbReference type="InterPro" id="IPR015365">
    <property type="entry name" value="Elong-fact-P_C"/>
</dbReference>
<dbReference type="InterPro" id="IPR012340">
    <property type="entry name" value="NA-bd_OB-fold"/>
</dbReference>
<dbReference type="InterPro" id="IPR014722">
    <property type="entry name" value="Rib_uL2_dom2"/>
</dbReference>
<dbReference type="InterPro" id="IPR020599">
    <property type="entry name" value="Transl_elong_fac_P/YeiP"/>
</dbReference>
<dbReference type="InterPro" id="IPR013185">
    <property type="entry name" value="Transl_elong_KOW-like"/>
</dbReference>
<dbReference type="InterPro" id="IPR001059">
    <property type="entry name" value="Transl_elong_P/YeiP_cen"/>
</dbReference>
<dbReference type="InterPro" id="IPR013852">
    <property type="entry name" value="Transl_elong_P/YeiP_CS"/>
</dbReference>
<dbReference type="InterPro" id="IPR011768">
    <property type="entry name" value="Transl_elongation_fac_P"/>
</dbReference>
<dbReference type="InterPro" id="IPR008991">
    <property type="entry name" value="Translation_prot_SH3-like_sf"/>
</dbReference>
<dbReference type="NCBIfam" id="TIGR00038">
    <property type="entry name" value="efp"/>
    <property type="match status" value="1"/>
</dbReference>
<dbReference type="NCBIfam" id="NF001810">
    <property type="entry name" value="PRK00529.1"/>
    <property type="match status" value="1"/>
</dbReference>
<dbReference type="PANTHER" id="PTHR30053">
    <property type="entry name" value="ELONGATION FACTOR P"/>
    <property type="match status" value="1"/>
</dbReference>
<dbReference type="PANTHER" id="PTHR30053:SF14">
    <property type="entry name" value="TRANSLATION ELONGATION FACTOR KOW-LIKE DOMAIN-CONTAINING PROTEIN"/>
    <property type="match status" value="1"/>
</dbReference>
<dbReference type="Pfam" id="PF01132">
    <property type="entry name" value="EFP"/>
    <property type="match status" value="1"/>
</dbReference>
<dbReference type="Pfam" id="PF08207">
    <property type="entry name" value="EFP_N"/>
    <property type="match status" value="1"/>
</dbReference>
<dbReference type="Pfam" id="PF09285">
    <property type="entry name" value="Elong-fact-P_C"/>
    <property type="match status" value="1"/>
</dbReference>
<dbReference type="PIRSF" id="PIRSF005901">
    <property type="entry name" value="EF-P"/>
    <property type="match status" value="1"/>
</dbReference>
<dbReference type="SMART" id="SM01185">
    <property type="entry name" value="EFP"/>
    <property type="match status" value="1"/>
</dbReference>
<dbReference type="SMART" id="SM00841">
    <property type="entry name" value="Elong-fact-P_C"/>
    <property type="match status" value="1"/>
</dbReference>
<dbReference type="SUPFAM" id="SSF50249">
    <property type="entry name" value="Nucleic acid-binding proteins"/>
    <property type="match status" value="2"/>
</dbReference>
<dbReference type="SUPFAM" id="SSF50104">
    <property type="entry name" value="Translation proteins SH3-like domain"/>
    <property type="match status" value="1"/>
</dbReference>
<dbReference type="PROSITE" id="PS01275">
    <property type="entry name" value="EFP"/>
    <property type="match status" value="1"/>
</dbReference>
<accession>A8GRA8</accession>
<proteinExistence type="inferred from homology"/>
<sequence>MKISANSIRTGNILVYNNDLWVVSKTPEHTQPGKGGAYVQVEMKNLKTGTKRNERFSSADYLEKAELEQKDYQFLYFEGDDLVLMDTKHFDQINISKEMLEEKLSFLTENMIVKIEFYNDKPLNIELPPTVILEISETDPVIKGATATASYKPAILENGIKVKVPQYLEIGEKIVVKTDDMTYVERAK</sequence>
<reference key="1">
    <citation type="submission" date="2007-09" db="EMBL/GenBank/DDBJ databases">
        <title>Complete genome sequence of Rickettsia rickettsii.</title>
        <authorList>
            <person name="Madan A."/>
            <person name="Fahey J."/>
            <person name="Helton E."/>
            <person name="Ketteman M."/>
            <person name="Madan A."/>
            <person name="Rodrigues S."/>
            <person name="Sanchez A."/>
            <person name="Dasch G."/>
            <person name="Eremeeva M."/>
        </authorList>
    </citation>
    <scope>NUCLEOTIDE SEQUENCE [LARGE SCALE GENOMIC DNA]</scope>
    <source>
        <strain>Sheila Smith</strain>
    </source>
</reference>